<comment type="catalytic activity">
    <reaction evidence="2">
        <text>GTP + H2O = 7,8-dihydroneopterin 3'-triphosphate + formate + H(+)</text>
        <dbReference type="Rhea" id="RHEA:17473"/>
        <dbReference type="ChEBI" id="CHEBI:15377"/>
        <dbReference type="ChEBI" id="CHEBI:15378"/>
        <dbReference type="ChEBI" id="CHEBI:15740"/>
        <dbReference type="ChEBI" id="CHEBI:37565"/>
        <dbReference type="ChEBI" id="CHEBI:58462"/>
        <dbReference type="EC" id="3.5.4.16"/>
    </reaction>
</comment>
<comment type="pathway">
    <text evidence="2">Cofactor biosynthesis; 7,8-dihydroneopterin triphosphate biosynthesis; 7,8-dihydroneopterin triphosphate from GTP: step 1/1.</text>
</comment>
<comment type="subunit">
    <text evidence="1">Toroid-shaped homodecamer, composed of two pentamers of five dimers.</text>
</comment>
<comment type="similarity">
    <text evidence="2">Belongs to the GTP cyclohydrolase I family.</text>
</comment>
<protein>
    <recommendedName>
        <fullName evidence="2">GTP cyclohydrolase 1</fullName>
        <ecNumber evidence="2">3.5.4.16</ecNumber>
    </recommendedName>
    <alternativeName>
        <fullName evidence="2">GTP cyclohydrolase I</fullName>
        <shortName evidence="2">GTP-CH-I</shortName>
    </alternativeName>
</protein>
<reference key="1">
    <citation type="journal article" date="2006" name="PLoS Biol.">
        <title>Metabolic complementarity and genomics of the dual bacterial symbiosis of sharpshooters.</title>
        <authorList>
            <person name="Wu D."/>
            <person name="Daugherty S.C."/>
            <person name="Van Aken S.E."/>
            <person name="Pai G.H."/>
            <person name="Watkins K.L."/>
            <person name="Khouri H."/>
            <person name="Tallon L.J."/>
            <person name="Zaborsky J.M."/>
            <person name="Dunbar H.E."/>
            <person name="Tran P.L."/>
            <person name="Moran N.A."/>
            <person name="Eisen J.A."/>
        </authorList>
    </citation>
    <scope>NUCLEOTIDE SEQUENCE [LARGE SCALE GENOMIC DNA]</scope>
</reference>
<gene>
    <name evidence="2" type="primary">folE</name>
    <name type="ordered locus">BCI_0394</name>
</gene>
<keyword id="KW-0342">GTP-binding</keyword>
<keyword id="KW-0378">Hydrolase</keyword>
<keyword id="KW-0479">Metal-binding</keyword>
<keyword id="KW-0547">Nucleotide-binding</keyword>
<keyword id="KW-0554">One-carbon metabolism</keyword>
<keyword id="KW-1185">Reference proteome</keyword>
<keyword id="KW-0862">Zinc</keyword>
<evidence type="ECO:0000250" key="1"/>
<evidence type="ECO:0000255" key="2">
    <source>
        <dbReference type="HAMAP-Rule" id="MF_00223"/>
    </source>
</evidence>
<accession>Q1LT77</accession>
<name>GCH1_BAUCH</name>
<feature type="chain" id="PRO_1000043667" description="GTP cyclohydrolase 1">
    <location>
        <begin position="1"/>
        <end position="220"/>
    </location>
</feature>
<feature type="binding site" evidence="2">
    <location>
        <position position="110"/>
    </location>
    <ligand>
        <name>Zn(2+)</name>
        <dbReference type="ChEBI" id="CHEBI:29105"/>
    </ligand>
</feature>
<feature type="binding site" evidence="2">
    <location>
        <position position="113"/>
    </location>
    <ligand>
        <name>Zn(2+)</name>
        <dbReference type="ChEBI" id="CHEBI:29105"/>
    </ligand>
</feature>
<feature type="binding site" evidence="2">
    <location>
        <position position="181"/>
    </location>
    <ligand>
        <name>Zn(2+)</name>
        <dbReference type="ChEBI" id="CHEBI:29105"/>
    </ligand>
</feature>
<sequence>MVILTKEASMVRQALLANGLEPFLRGEERLGIEARKRRIAAHMKKIMTLLNLDLADDSLAKTPYRIAYMYIEEIFPGLDYANFPQITLISNKMKADEMVTVRNITLTSTCEHHFLMIDGKATVSYIPKSNVIGLSKINRIVRFFAQRPQVQERLTQQILLALQTILGTNNVAVSIYAVHYCVKARGICDSTSTTTTTSLGGIFKSSQNTRQEFLRTINQT</sequence>
<dbReference type="EC" id="3.5.4.16" evidence="2"/>
<dbReference type="EMBL" id="CP000238">
    <property type="protein sequence ID" value="ABF13956.1"/>
    <property type="molecule type" value="Genomic_DNA"/>
</dbReference>
<dbReference type="RefSeq" id="WP_011520570.1">
    <property type="nucleotide sequence ID" value="NC_007984.1"/>
</dbReference>
<dbReference type="SMR" id="Q1LT77"/>
<dbReference type="STRING" id="374463.BCI_0394"/>
<dbReference type="KEGG" id="bci:BCI_0394"/>
<dbReference type="HOGENOM" id="CLU_049768_3_2_6"/>
<dbReference type="OrthoDB" id="9801207at2"/>
<dbReference type="UniPathway" id="UPA00848">
    <property type="reaction ID" value="UER00151"/>
</dbReference>
<dbReference type="Proteomes" id="UP000002427">
    <property type="component" value="Chromosome"/>
</dbReference>
<dbReference type="GO" id="GO:0005737">
    <property type="term" value="C:cytoplasm"/>
    <property type="evidence" value="ECO:0007669"/>
    <property type="project" value="TreeGrafter"/>
</dbReference>
<dbReference type="GO" id="GO:0005525">
    <property type="term" value="F:GTP binding"/>
    <property type="evidence" value="ECO:0007669"/>
    <property type="project" value="UniProtKB-KW"/>
</dbReference>
<dbReference type="GO" id="GO:0003934">
    <property type="term" value="F:GTP cyclohydrolase I activity"/>
    <property type="evidence" value="ECO:0007669"/>
    <property type="project" value="UniProtKB-UniRule"/>
</dbReference>
<dbReference type="GO" id="GO:0008270">
    <property type="term" value="F:zinc ion binding"/>
    <property type="evidence" value="ECO:0007669"/>
    <property type="project" value="UniProtKB-UniRule"/>
</dbReference>
<dbReference type="GO" id="GO:0006730">
    <property type="term" value="P:one-carbon metabolic process"/>
    <property type="evidence" value="ECO:0007669"/>
    <property type="project" value="UniProtKB-UniRule"/>
</dbReference>
<dbReference type="GO" id="GO:0006729">
    <property type="term" value="P:tetrahydrobiopterin biosynthetic process"/>
    <property type="evidence" value="ECO:0007669"/>
    <property type="project" value="TreeGrafter"/>
</dbReference>
<dbReference type="GO" id="GO:0046654">
    <property type="term" value="P:tetrahydrofolate biosynthetic process"/>
    <property type="evidence" value="ECO:0007669"/>
    <property type="project" value="UniProtKB-UniRule"/>
</dbReference>
<dbReference type="FunFam" id="3.30.1130.10:FF:000001">
    <property type="entry name" value="GTP cyclohydrolase 1"/>
    <property type="match status" value="1"/>
</dbReference>
<dbReference type="Gene3D" id="1.10.286.10">
    <property type="match status" value="1"/>
</dbReference>
<dbReference type="Gene3D" id="3.30.1130.10">
    <property type="match status" value="1"/>
</dbReference>
<dbReference type="HAMAP" id="MF_00223">
    <property type="entry name" value="FolE"/>
    <property type="match status" value="1"/>
</dbReference>
<dbReference type="InterPro" id="IPR043133">
    <property type="entry name" value="GTP-CH-I_C/QueF"/>
</dbReference>
<dbReference type="InterPro" id="IPR043134">
    <property type="entry name" value="GTP-CH-I_N"/>
</dbReference>
<dbReference type="InterPro" id="IPR001474">
    <property type="entry name" value="GTP_CycHdrlase_I"/>
</dbReference>
<dbReference type="InterPro" id="IPR018234">
    <property type="entry name" value="GTP_CycHdrlase_I_CS"/>
</dbReference>
<dbReference type="InterPro" id="IPR020602">
    <property type="entry name" value="GTP_CycHdrlase_I_dom"/>
</dbReference>
<dbReference type="NCBIfam" id="TIGR00063">
    <property type="entry name" value="folE"/>
    <property type="match status" value="1"/>
</dbReference>
<dbReference type="NCBIfam" id="NF006824">
    <property type="entry name" value="PRK09347.1-1"/>
    <property type="match status" value="1"/>
</dbReference>
<dbReference type="NCBIfam" id="NF006826">
    <property type="entry name" value="PRK09347.1-3"/>
    <property type="match status" value="1"/>
</dbReference>
<dbReference type="PANTHER" id="PTHR11109:SF7">
    <property type="entry name" value="GTP CYCLOHYDROLASE 1"/>
    <property type="match status" value="1"/>
</dbReference>
<dbReference type="PANTHER" id="PTHR11109">
    <property type="entry name" value="GTP CYCLOHYDROLASE I"/>
    <property type="match status" value="1"/>
</dbReference>
<dbReference type="Pfam" id="PF01227">
    <property type="entry name" value="GTP_cyclohydroI"/>
    <property type="match status" value="1"/>
</dbReference>
<dbReference type="SUPFAM" id="SSF55620">
    <property type="entry name" value="Tetrahydrobiopterin biosynthesis enzymes-like"/>
    <property type="match status" value="1"/>
</dbReference>
<dbReference type="PROSITE" id="PS00859">
    <property type="entry name" value="GTP_CYCLOHYDROL_1_1"/>
    <property type="match status" value="1"/>
</dbReference>
<dbReference type="PROSITE" id="PS00860">
    <property type="entry name" value="GTP_CYCLOHYDROL_1_2"/>
    <property type="match status" value="1"/>
</dbReference>
<proteinExistence type="inferred from homology"/>
<organism>
    <name type="scientific">Baumannia cicadellinicola subsp. Homalodisca coagulata</name>
    <dbReference type="NCBI Taxonomy" id="374463"/>
    <lineage>
        <taxon>Bacteria</taxon>
        <taxon>Pseudomonadati</taxon>
        <taxon>Pseudomonadota</taxon>
        <taxon>Gammaproteobacteria</taxon>
        <taxon>Candidatus Palibaumannia</taxon>
    </lineage>
</organism>